<name>SYY_NITWN</name>
<organism>
    <name type="scientific">Nitrobacter winogradskyi (strain ATCC 25391 / DSM 10237 / CIP 104748 / NCIMB 11846 / Nb-255)</name>
    <dbReference type="NCBI Taxonomy" id="323098"/>
    <lineage>
        <taxon>Bacteria</taxon>
        <taxon>Pseudomonadati</taxon>
        <taxon>Pseudomonadota</taxon>
        <taxon>Alphaproteobacteria</taxon>
        <taxon>Hyphomicrobiales</taxon>
        <taxon>Nitrobacteraceae</taxon>
        <taxon>Nitrobacter</taxon>
    </lineage>
</organism>
<accession>Q3SS12</accession>
<proteinExistence type="inferred from homology"/>
<reference key="1">
    <citation type="journal article" date="2006" name="Appl. Environ. Microbiol.">
        <title>Genome sequence of the chemolithoautotrophic nitrite-oxidizing bacterium Nitrobacter winogradskyi Nb-255.</title>
        <authorList>
            <person name="Starkenburg S.R."/>
            <person name="Chain P.S.G."/>
            <person name="Sayavedra-Soto L.A."/>
            <person name="Hauser L."/>
            <person name="Land M.L."/>
            <person name="Larimer F.W."/>
            <person name="Malfatti S.A."/>
            <person name="Klotz M.G."/>
            <person name="Bottomley P.J."/>
            <person name="Arp D.J."/>
            <person name="Hickey W.J."/>
        </authorList>
    </citation>
    <scope>NUCLEOTIDE SEQUENCE [LARGE SCALE GENOMIC DNA]</scope>
    <source>
        <strain>ATCC 25391 / DSM 10237 / CIP 104748 / NCIMB 11846 / Nb-255</strain>
    </source>
</reference>
<keyword id="KW-0030">Aminoacyl-tRNA synthetase</keyword>
<keyword id="KW-0067">ATP-binding</keyword>
<keyword id="KW-0963">Cytoplasm</keyword>
<keyword id="KW-0436">Ligase</keyword>
<keyword id="KW-0547">Nucleotide-binding</keyword>
<keyword id="KW-0648">Protein biosynthesis</keyword>
<keyword id="KW-1185">Reference proteome</keyword>
<keyword id="KW-0694">RNA-binding</keyword>
<comment type="function">
    <text evidence="1">Catalyzes the attachment of tyrosine to tRNA(Tyr) in a two-step reaction: tyrosine is first activated by ATP to form Tyr-AMP and then transferred to the acceptor end of tRNA(Tyr).</text>
</comment>
<comment type="catalytic activity">
    <reaction evidence="1">
        <text>tRNA(Tyr) + L-tyrosine + ATP = L-tyrosyl-tRNA(Tyr) + AMP + diphosphate + H(+)</text>
        <dbReference type="Rhea" id="RHEA:10220"/>
        <dbReference type="Rhea" id="RHEA-COMP:9706"/>
        <dbReference type="Rhea" id="RHEA-COMP:9707"/>
        <dbReference type="ChEBI" id="CHEBI:15378"/>
        <dbReference type="ChEBI" id="CHEBI:30616"/>
        <dbReference type="ChEBI" id="CHEBI:33019"/>
        <dbReference type="ChEBI" id="CHEBI:58315"/>
        <dbReference type="ChEBI" id="CHEBI:78442"/>
        <dbReference type="ChEBI" id="CHEBI:78536"/>
        <dbReference type="ChEBI" id="CHEBI:456215"/>
        <dbReference type="EC" id="6.1.1.1"/>
    </reaction>
</comment>
<comment type="subunit">
    <text evidence="1">Homodimer.</text>
</comment>
<comment type="subcellular location">
    <subcellularLocation>
        <location evidence="1">Cytoplasm</location>
    </subcellularLocation>
</comment>
<comment type="similarity">
    <text evidence="1">Belongs to the class-I aminoacyl-tRNA synthetase family. TyrS type 1 subfamily.</text>
</comment>
<dbReference type="EC" id="6.1.1.1" evidence="1"/>
<dbReference type="EMBL" id="CP000115">
    <property type="protein sequence ID" value="ABA04929.1"/>
    <property type="molecule type" value="Genomic_DNA"/>
</dbReference>
<dbReference type="RefSeq" id="WP_011314928.1">
    <property type="nucleotide sequence ID" value="NC_007406.1"/>
</dbReference>
<dbReference type="SMR" id="Q3SS12"/>
<dbReference type="STRING" id="323098.Nwi_1668"/>
<dbReference type="KEGG" id="nwi:Nwi_1668"/>
<dbReference type="eggNOG" id="COG0162">
    <property type="taxonomic scope" value="Bacteria"/>
</dbReference>
<dbReference type="HOGENOM" id="CLU_024003_0_3_5"/>
<dbReference type="OrthoDB" id="9804243at2"/>
<dbReference type="Proteomes" id="UP000002531">
    <property type="component" value="Chromosome"/>
</dbReference>
<dbReference type="GO" id="GO:0005829">
    <property type="term" value="C:cytosol"/>
    <property type="evidence" value="ECO:0007669"/>
    <property type="project" value="TreeGrafter"/>
</dbReference>
<dbReference type="GO" id="GO:0005524">
    <property type="term" value="F:ATP binding"/>
    <property type="evidence" value="ECO:0007669"/>
    <property type="project" value="UniProtKB-UniRule"/>
</dbReference>
<dbReference type="GO" id="GO:0003723">
    <property type="term" value="F:RNA binding"/>
    <property type="evidence" value="ECO:0007669"/>
    <property type="project" value="UniProtKB-KW"/>
</dbReference>
<dbReference type="GO" id="GO:0004831">
    <property type="term" value="F:tyrosine-tRNA ligase activity"/>
    <property type="evidence" value="ECO:0007669"/>
    <property type="project" value="UniProtKB-UniRule"/>
</dbReference>
<dbReference type="GO" id="GO:0006437">
    <property type="term" value="P:tyrosyl-tRNA aminoacylation"/>
    <property type="evidence" value="ECO:0007669"/>
    <property type="project" value="UniProtKB-UniRule"/>
</dbReference>
<dbReference type="CDD" id="cd00165">
    <property type="entry name" value="S4"/>
    <property type="match status" value="1"/>
</dbReference>
<dbReference type="CDD" id="cd00805">
    <property type="entry name" value="TyrRS_core"/>
    <property type="match status" value="1"/>
</dbReference>
<dbReference type="FunFam" id="1.10.240.10:FF:000001">
    <property type="entry name" value="Tyrosine--tRNA ligase"/>
    <property type="match status" value="1"/>
</dbReference>
<dbReference type="FunFam" id="3.40.50.620:FF:000008">
    <property type="entry name" value="Tyrosine--tRNA ligase"/>
    <property type="match status" value="1"/>
</dbReference>
<dbReference type="Gene3D" id="3.40.50.620">
    <property type="entry name" value="HUPs"/>
    <property type="match status" value="1"/>
</dbReference>
<dbReference type="Gene3D" id="3.10.290.10">
    <property type="entry name" value="RNA-binding S4 domain"/>
    <property type="match status" value="1"/>
</dbReference>
<dbReference type="Gene3D" id="1.10.240.10">
    <property type="entry name" value="Tyrosyl-Transfer RNA Synthetase"/>
    <property type="match status" value="1"/>
</dbReference>
<dbReference type="HAMAP" id="MF_02006">
    <property type="entry name" value="Tyr_tRNA_synth_type1"/>
    <property type="match status" value="1"/>
</dbReference>
<dbReference type="InterPro" id="IPR002305">
    <property type="entry name" value="aa-tRNA-synth_Ic"/>
</dbReference>
<dbReference type="InterPro" id="IPR014729">
    <property type="entry name" value="Rossmann-like_a/b/a_fold"/>
</dbReference>
<dbReference type="InterPro" id="IPR036986">
    <property type="entry name" value="S4_RNA-bd_sf"/>
</dbReference>
<dbReference type="InterPro" id="IPR054608">
    <property type="entry name" value="SYY-like_C"/>
</dbReference>
<dbReference type="InterPro" id="IPR002307">
    <property type="entry name" value="Tyr-tRNA-ligase"/>
</dbReference>
<dbReference type="InterPro" id="IPR024088">
    <property type="entry name" value="Tyr-tRNA-ligase_bac-type"/>
</dbReference>
<dbReference type="InterPro" id="IPR024107">
    <property type="entry name" value="Tyr-tRNA-ligase_bac_1"/>
</dbReference>
<dbReference type="NCBIfam" id="TIGR00234">
    <property type="entry name" value="tyrS"/>
    <property type="match status" value="1"/>
</dbReference>
<dbReference type="PANTHER" id="PTHR11766:SF0">
    <property type="entry name" value="TYROSINE--TRNA LIGASE, MITOCHONDRIAL"/>
    <property type="match status" value="1"/>
</dbReference>
<dbReference type="PANTHER" id="PTHR11766">
    <property type="entry name" value="TYROSYL-TRNA SYNTHETASE"/>
    <property type="match status" value="1"/>
</dbReference>
<dbReference type="Pfam" id="PF22421">
    <property type="entry name" value="SYY_C-terminal"/>
    <property type="match status" value="1"/>
</dbReference>
<dbReference type="Pfam" id="PF00579">
    <property type="entry name" value="tRNA-synt_1b"/>
    <property type="match status" value="1"/>
</dbReference>
<dbReference type="PRINTS" id="PR01040">
    <property type="entry name" value="TRNASYNTHTYR"/>
</dbReference>
<dbReference type="SUPFAM" id="SSF55174">
    <property type="entry name" value="Alpha-L RNA-binding motif"/>
    <property type="match status" value="1"/>
</dbReference>
<dbReference type="SUPFAM" id="SSF52374">
    <property type="entry name" value="Nucleotidylyl transferase"/>
    <property type="match status" value="1"/>
</dbReference>
<dbReference type="PROSITE" id="PS50889">
    <property type="entry name" value="S4"/>
    <property type="match status" value="1"/>
</dbReference>
<sequence length="417" mass="46100">MVAFKSDFLNTLQERGFIHQCSDFEGLDALASRNQVTAYTGYDCTAPSLHVGHLLSIMMMHWLQQTGNKPIALMGGGTTRVGDPSGRDETRKILSYDQIDANKESIKGTFLKFLVFGDGKNDAIMTDNAEWLTRLNYIEMLRDVGRHFSINRMLTMDSVKMRLEREQELSFIEFNYMILQSYDYVELARRHGCNLQMGGSDQWGNIVNGVDLGRRMGTHQLYALTCPLLTTSSGAKMGKTAAGAVWLNATMLPVYDYWQYWRNVEDADVGRFLKLFTILPMGEIAKLAALQGSEINEAKKVLATEATALLHGRDEAEKAADTARTTFEQGAISESLPTLDIPRSELASGAGVLALFVKAGLVASNGEARRQIKGGGLRVNDVAVADDKMVLTPDHLTPEGVIKLSMGKKRHVLLRPA</sequence>
<feature type="chain" id="PRO_0000234742" description="Tyrosine--tRNA ligase">
    <location>
        <begin position="1"/>
        <end position="417"/>
    </location>
</feature>
<feature type="domain" description="S4 RNA-binding" evidence="1">
    <location>
        <begin position="350"/>
        <end position="417"/>
    </location>
</feature>
<feature type="short sequence motif" description="'HIGH' region">
    <location>
        <begin position="44"/>
        <end position="53"/>
    </location>
</feature>
<feature type="short sequence motif" description="'KMSKS' region">
    <location>
        <begin position="236"/>
        <end position="240"/>
    </location>
</feature>
<feature type="binding site" evidence="1">
    <location>
        <position position="39"/>
    </location>
    <ligand>
        <name>L-tyrosine</name>
        <dbReference type="ChEBI" id="CHEBI:58315"/>
    </ligand>
</feature>
<feature type="binding site" evidence="1">
    <location>
        <position position="176"/>
    </location>
    <ligand>
        <name>L-tyrosine</name>
        <dbReference type="ChEBI" id="CHEBI:58315"/>
    </ligand>
</feature>
<feature type="binding site" evidence="1">
    <location>
        <position position="180"/>
    </location>
    <ligand>
        <name>L-tyrosine</name>
        <dbReference type="ChEBI" id="CHEBI:58315"/>
    </ligand>
</feature>
<feature type="binding site" evidence="1">
    <location>
        <position position="239"/>
    </location>
    <ligand>
        <name>ATP</name>
        <dbReference type="ChEBI" id="CHEBI:30616"/>
    </ligand>
</feature>
<gene>
    <name evidence="1" type="primary">tyrS</name>
    <name type="ordered locus">Nwi_1668</name>
</gene>
<evidence type="ECO:0000255" key="1">
    <source>
        <dbReference type="HAMAP-Rule" id="MF_02006"/>
    </source>
</evidence>
<protein>
    <recommendedName>
        <fullName evidence="1">Tyrosine--tRNA ligase</fullName>
        <ecNumber evidence="1">6.1.1.1</ecNumber>
    </recommendedName>
    <alternativeName>
        <fullName evidence="1">Tyrosyl-tRNA synthetase</fullName>
        <shortName evidence="1">TyrRS</shortName>
    </alternativeName>
</protein>